<reference key="1">
    <citation type="journal article" date="2005" name="Proc. Natl. Acad. Sci. U.S.A.">
        <title>Complete genome sequence of Vibrio fischeri: a symbiotic bacterium with pathogenic congeners.</title>
        <authorList>
            <person name="Ruby E.G."/>
            <person name="Urbanowski M."/>
            <person name="Campbell J."/>
            <person name="Dunn A."/>
            <person name="Faini M."/>
            <person name="Gunsalus R."/>
            <person name="Lostroh P."/>
            <person name="Lupp C."/>
            <person name="McCann J."/>
            <person name="Millikan D."/>
            <person name="Schaefer A."/>
            <person name="Stabb E."/>
            <person name="Stevens A."/>
            <person name="Visick K."/>
            <person name="Whistler C."/>
            <person name="Greenberg E.P."/>
        </authorList>
    </citation>
    <scope>NUCLEOTIDE SEQUENCE [LARGE SCALE GENOMIC DNA]</scope>
    <source>
        <strain>ATCC 700601 / ES114</strain>
    </source>
</reference>
<sequence length="431" mass="45935">MTKSAELFAKAQDKIPGGVNSPVRAFAGVGGSPIFVERADGPLIFDADGKAYIDYVGSWGPMILGHNHAAIREAVISAAQRGLSFGAPTETEITMAELVSELVPSMEQVRMVSSGTEATMSAIRLARGYTGRDKIMKFEGCYHGHADSLLVKAGSGALTLGQPSSPGVPADFAKYTLTATFNDLDSVRELFAVNKGEIACIIVEPVAGNMNCIPPVEGFHEGLRQICDEEGALLIFDEVMTGFRVAENCAQGYYNIKPDLTTLGKVIGGGMPVGAFGGRKEVMQYIAPTGPVYQAGTLSGNPVAMAAGFACLKVLTEEGNEKRLADTTRHLANGFKELANKHGIPMVVNQVGGMFGFFFTDQETVTSYADVAKCDIERFKRFFHLMLKKGVYLAPSAFEASFTSLAHGPKEIEATLEAADQCFAIIASEAK</sequence>
<proteinExistence type="inferred from homology"/>
<name>GSA_ALIF1</name>
<comment type="catalytic activity">
    <reaction evidence="1">
        <text>(S)-4-amino-5-oxopentanoate = 5-aminolevulinate</text>
        <dbReference type="Rhea" id="RHEA:14265"/>
        <dbReference type="ChEBI" id="CHEBI:57501"/>
        <dbReference type="ChEBI" id="CHEBI:356416"/>
        <dbReference type="EC" id="5.4.3.8"/>
    </reaction>
</comment>
<comment type="cofactor">
    <cofactor evidence="1">
        <name>pyridoxal 5'-phosphate</name>
        <dbReference type="ChEBI" id="CHEBI:597326"/>
    </cofactor>
</comment>
<comment type="pathway">
    <text evidence="1">Porphyrin-containing compound metabolism; protoporphyrin-IX biosynthesis; 5-aminolevulinate from L-glutamyl-tRNA(Glu): step 2/2.</text>
</comment>
<comment type="subunit">
    <text evidence="1">Homodimer.</text>
</comment>
<comment type="subcellular location">
    <subcellularLocation>
        <location evidence="1">Cytoplasm</location>
    </subcellularLocation>
</comment>
<comment type="similarity">
    <text evidence="1">Belongs to the class-III pyridoxal-phosphate-dependent aminotransferase family. HemL subfamily.</text>
</comment>
<dbReference type="EC" id="5.4.3.8" evidence="1"/>
<dbReference type="EMBL" id="CP000020">
    <property type="protein sequence ID" value="AAW86630.1"/>
    <property type="molecule type" value="Genomic_DNA"/>
</dbReference>
<dbReference type="RefSeq" id="WP_011262582.1">
    <property type="nucleotide sequence ID" value="NC_006840.2"/>
</dbReference>
<dbReference type="RefSeq" id="YP_205518.1">
    <property type="nucleotide sequence ID" value="NC_006840.2"/>
</dbReference>
<dbReference type="SMR" id="Q5E2W6"/>
<dbReference type="STRING" id="312309.VF_2135"/>
<dbReference type="EnsemblBacteria" id="AAW86630">
    <property type="protein sequence ID" value="AAW86630"/>
    <property type="gene ID" value="VF_2135"/>
</dbReference>
<dbReference type="GeneID" id="54164845"/>
<dbReference type="KEGG" id="vfi:VF_2135"/>
<dbReference type="PATRIC" id="fig|312309.11.peg.2177"/>
<dbReference type="eggNOG" id="COG0001">
    <property type="taxonomic scope" value="Bacteria"/>
</dbReference>
<dbReference type="HOGENOM" id="CLU_016922_1_5_6"/>
<dbReference type="OrthoDB" id="9801052at2"/>
<dbReference type="UniPathway" id="UPA00251">
    <property type="reaction ID" value="UER00317"/>
</dbReference>
<dbReference type="Proteomes" id="UP000000537">
    <property type="component" value="Chromosome I"/>
</dbReference>
<dbReference type="GO" id="GO:0005737">
    <property type="term" value="C:cytoplasm"/>
    <property type="evidence" value="ECO:0007669"/>
    <property type="project" value="UniProtKB-SubCell"/>
</dbReference>
<dbReference type="GO" id="GO:0042286">
    <property type="term" value="F:glutamate-1-semialdehyde 2,1-aminomutase activity"/>
    <property type="evidence" value="ECO:0007669"/>
    <property type="project" value="UniProtKB-UniRule"/>
</dbReference>
<dbReference type="GO" id="GO:0030170">
    <property type="term" value="F:pyridoxal phosphate binding"/>
    <property type="evidence" value="ECO:0007669"/>
    <property type="project" value="InterPro"/>
</dbReference>
<dbReference type="GO" id="GO:0008483">
    <property type="term" value="F:transaminase activity"/>
    <property type="evidence" value="ECO:0007669"/>
    <property type="project" value="InterPro"/>
</dbReference>
<dbReference type="GO" id="GO:0006782">
    <property type="term" value="P:protoporphyrinogen IX biosynthetic process"/>
    <property type="evidence" value="ECO:0007669"/>
    <property type="project" value="UniProtKB-UniRule"/>
</dbReference>
<dbReference type="CDD" id="cd00610">
    <property type="entry name" value="OAT_like"/>
    <property type="match status" value="1"/>
</dbReference>
<dbReference type="FunFam" id="3.40.640.10:FF:000021">
    <property type="entry name" value="Glutamate-1-semialdehyde 2,1-aminomutase"/>
    <property type="match status" value="1"/>
</dbReference>
<dbReference type="FunFam" id="3.90.1150.10:FF:000012">
    <property type="entry name" value="Glutamate-1-semialdehyde 2,1-aminomutase"/>
    <property type="match status" value="1"/>
</dbReference>
<dbReference type="Gene3D" id="3.90.1150.10">
    <property type="entry name" value="Aspartate Aminotransferase, domain 1"/>
    <property type="match status" value="1"/>
</dbReference>
<dbReference type="Gene3D" id="3.40.640.10">
    <property type="entry name" value="Type I PLP-dependent aspartate aminotransferase-like (Major domain)"/>
    <property type="match status" value="1"/>
</dbReference>
<dbReference type="HAMAP" id="MF_00375">
    <property type="entry name" value="HemL_aminotrans_3"/>
    <property type="match status" value="1"/>
</dbReference>
<dbReference type="InterPro" id="IPR004639">
    <property type="entry name" value="4pyrrol_synth_GluAld_NH2Trfase"/>
</dbReference>
<dbReference type="InterPro" id="IPR005814">
    <property type="entry name" value="Aminotrans_3"/>
</dbReference>
<dbReference type="InterPro" id="IPR049704">
    <property type="entry name" value="Aminotrans_3_PPA_site"/>
</dbReference>
<dbReference type="InterPro" id="IPR015424">
    <property type="entry name" value="PyrdxlP-dep_Trfase"/>
</dbReference>
<dbReference type="InterPro" id="IPR015421">
    <property type="entry name" value="PyrdxlP-dep_Trfase_major"/>
</dbReference>
<dbReference type="InterPro" id="IPR015422">
    <property type="entry name" value="PyrdxlP-dep_Trfase_small"/>
</dbReference>
<dbReference type="NCBIfam" id="TIGR00713">
    <property type="entry name" value="hemL"/>
    <property type="match status" value="1"/>
</dbReference>
<dbReference type="NCBIfam" id="NF000818">
    <property type="entry name" value="PRK00062.1"/>
    <property type="match status" value="1"/>
</dbReference>
<dbReference type="PANTHER" id="PTHR43713">
    <property type="entry name" value="GLUTAMATE-1-SEMIALDEHYDE 2,1-AMINOMUTASE"/>
    <property type="match status" value="1"/>
</dbReference>
<dbReference type="PANTHER" id="PTHR43713:SF3">
    <property type="entry name" value="GLUTAMATE-1-SEMIALDEHYDE 2,1-AMINOMUTASE 1, CHLOROPLASTIC-RELATED"/>
    <property type="match status" value="1"/>
</dbReference>
<dbReference type="Pfam" id="PF00202">
    <property type="entry name" value="Aminotran_3"/>
    <property type="match status" value="1"/>
</dbReference>
<dbReference type="SUPFAM" id="SSF53383">
    <property type="entry name" value="PLP-dependent transferases"/>
    <property type="match status" value="1"/>
</dbReference>
<dbReference type="PROSITE" id="PS00600">
    <property type="entry name" value="AA_TRANSFER_CLASS_3"/>
    <property type="match status" value="1"/>
</dbReference>
<protein>
    <recommendedName>
        <fullName evidence="1">Glutamate-1-semialdehyde 2,1-aminomutase</fullName>
        <shortName evidence="1">GSA</shortName>
        <ecNumber evidence="1">5.4.3.8</ecNumber>
    </recommendedName>
    <alternativeName>
        <fullName evidence="1">Glutamate-1-semialdehyde aminotransferase</fullName>
        <shortName evidence="1">GSA-AT</shortName>
    </alternativeName>
</protein>
<gene>
    <name evidence="1" type="primary">hemL</name>
    <name type="ordered locus">VF_2135</name>
</gene>
<feature type="chain" id="PRO_0000120464" description="Glutamate-1-semialdehyde 2,1-aminomutase">
    <location>
        <begin position="1"/>
        <end position="431"/>
    </location>
</feature>
<feature type="modified residue" description="N6-(pyridoxal phosphate)lysine" evidence="1">
    <location>
        <position position="265"/>
    </location>
</feature>
<accession>Q5E2W6</accession>
<organism>
    <name type="scientific">Aliivibrio fischeri (strain ATCC 700601 / ES114)</name>
    <name type="common">Vibrio fischeri</name>
    <dbReference type="NCBI Taxonomy" id="312309"/>
    <lineage>
        <taxon>Bacteria</taxon>
        <taxon>Pseudomonadati</taxon>
        <taxon>Pseudomonadota</taxon>
        <taxon>Gammaproteobacteria</taxon>
        <taxon>Vibrionales</taxon>
        <taxon>Vibrionaceae</taxon>
        <taxon>Aliivibrio</taxon>
    </lineage>
</organism>
<keyword id="KW-0963">Cytoplasm</keyword>
<keyword id="KW-0413">Isomerase</keyword>
<keyword id="KW-0627">Porphyrin biosynthesis</keyword>
<keyword id="KW-0663">Pyridoxal phosphate</keyword>
<keyword id="KW-1185">Reference proteome</keyword>
<evidence type="ECO:0000255" key="1">
    <source>
        <dbReference type="HAMAP-Rule" id="MF_00375"/>
    </source>
</evidence>